<reference key="1">
    <citation type="journal article" date="2000" name="Nature">
        <title>Genome sequence of the endocellular bacterial symbiont of aphids Buchnera sp. APS.</title>
        <authorList>
            <person name="Shigenobu S."/>
            <person name="Watanabe H."/>
            <person name="Hattori M."/>
            <person name="Sakaki Y."/>
            <person name="Ishikawa H."/>
        </authorList>
    </citation>
    <scope>NUCLEOTIDE SEQUENCE [LARGE SCALE GENOMIC DNA]</scope>
    <source>
        <strain>APS</strain>
    </source>
</reference>
<keyword id="KW-0131">Cell cycle</keyword>
<keyword id="KW-0132">Cell division</keyword>
<keyword id="KW-0997">Cell inner membrane</keyword>
<keyword id="KW-1003">Cell membrane</keyword>
<keyword id="KW-0133">Cell shape</keyword>
<keyword id="KW-0961">Cell wall biogenesis/degradation</keyword>
<keyword id="KW-0460">Magnesium</keyword>
<keyword id="KW-0472">Membrane</keyword>
<keyword id="KW-0479">Metal-binding</keyword>
<keyword id="KW-0573">Peptidoglycan synthesis</keyword>
<keyword id="KW-1185">Reference proteome</keyword>
<keyword id="KW-0808">Transferase</keyword>
<keyword id="KW-0812">Transmembrane</keyword>
<keyword id="KW-1133">Transmembrane helix</keyword>
<name>MRAY_BUCAI</name>
<feature type="chain" id="PRO_0000108797" description="Phospho-N-acetylmuramoyl-pentapeptide-transferase">
    <location>
        <begin position="1"/>
        <end position="357"/>
    </location>
</feature>
<feature type="transmembrane region" description="Helical" evidence="1">
    <location>
        <begin position="23"/>
        <end position="43"/>
    </location>
</feature>
<feature type="transmembrane region" description="Helical" evidence="1">
    <location>
        <begin position="70"/>
        <end position="90"/>
    </location>
</feature>
<feature type="transmembrane region" description="Helical" evidence="1">
    <location>
        <begin position="91"/>
        <end position="111"/>
    </location>
</feature>
<feature type="transmembrane region" description="Helical" evidence="1">
    <location>
        <begin position="127"/>
        <end position="147"/>
    </location>
</feature>
<feature type="transmembrane region" description="Helical" evidence="1">
    <location>
        <begin position="171"/>
        <end position="191"/>
    </location>
</feature>
<feature type="transmembrane region" description="Helical" evidence="1">
    <location>
        <begin position="196"/>
        <end position="216"/>
    </location>
</feature>
<feature type="transmembrane region" description="Helical" evidence="1">
    <location>
        <begin position="236"/>
        <end position="256"/>
    </location>
</feature>
<feature type="transmembrane region" description="Helical" evidence="1">
    <location>
        <begin position="260"/>
        <end position="280"/>
    </location>
</feature>
<feature type="transmembrane region" description="Helical" evidence="1">
    <location>
        <begin position="286"/>
        <end position="306"/>
    </location>
</feature>
<feature type="transmembrane region" description="Helical" evidence="1">
    <location>
        <begin position="334"/>
        <end position="354"/>
    </location>
</feature>
<evidence type="ECO:0000255" key="1">
    <source>
        <dbReference type="HAMAP-Rule" id="MF_00038"/>
    </source>
</evidence>
<comment type="function">
    <text evidence="1">Catalyzes the initial step of the lipid cycle reactions in the biosynthesis of the cell wall peptidoglycan: transfers peptidoglycan precursor phospho-MurNAc-pentapeptide from UDP-MurNAc-pentapeptide onto the lipid carrier undecaprenyl phosphate, yielding undecaprenyl-pyrophosphoryl-MurNAc-pentapeptide, known as lipid I.</text>
</comment>
<comment type="catalytic activity">
    <reaction evidence="1">
        <text>UDP-N-acetyl-alpha-D-muramoyl-L-alanyl-gamma-D-glutamyl-meso-2,6-diaminopimeloyl-D-alanyl-D-alanine + di-trans,octa-cis-undecaprenyl phosphate = di-trans,octa-cis-undecaprenyl diphospho-N-acetyl-alpha-D-muramoyl-L-alanyl-D-glutamyl-meso-2,6-diaminopimeloyl-D-alanyl-D-alanine + UMP</text>
        <dbReference type="Rhea" id="RHEA:28386"/>
        <dbReference type="ChEBI" id="CHEBI:57865"/>
        <dbReference type="ChEBI" id="CHEBI:60392"/>
        <dbReference type="ChEBI" id="CHEBI:61386"/>
        <dbReference type="ChEBI" id="CHEBI:61387"/>
        <dbReference type="EC" id="2.7.8.13"/>
    </reaction>
</comment>
<comment type="cofactor">
    <cofactor evidence="1">
        <name>Mg(2+)</name>
        <dbReference type="ChEBI" id="CHEBI:18420"/>
    </cofactor>
</comment>
<comment type="pathway">
    <text evidence="1">Cell wall biogenesis; peptidoglycan biosynthesis.</text>
</comment>
<comment type="subcellular location">
    <subcellularLocation>
        <location evidence="1">Cell inner membrane</location>
        <topology evidence="1">Multi-pass membrane protein</topology>
    </subcellularLocation>
</comment>
<comment type="similarity">
    <text evidence="1">Belongs to the glycosyltransferase 4 family. MraY subfamily.</text>
</comment>
<organism>
    <name type="scientific">Buchnera aphidicola subsp. Acyrthosiphon pisum (strain APS)</name>
    <name type="common">Acyrthosiphon pisum symbiotic bacterium</name>
    <dbReference type="NCBI Taxonomy" id="107806"/>
    <lineage>
        <taxon>Bacteria</taxon>
        <taxon>Pseudomonadati</taxon>
        <taxon>Pseudomonadota</taxon>
        <taxon>Gammaproteobacteria</taxon>
        <taxon>Enterobacterales</taxon>
        <taxon>Erwiniaceae</taxon>
        <taxon>Buchnera</taxon>
    </lineage>
</organism>
<proteinExistence type="inferred from homology"/>
<sequence length="357" mass="40961">MLIFFNKYLHINLNILSYIPYRAIFSLLTSFFINLYIGPYFIYYFKKLQTYQIIRNNGPKTHYSKKNTPTMGGIFIIFSILFSTILYCNLSNIYIWYVISILIGYGLIGFIDDYKKIKYKNSQGLKLKWKYFFLSIIAFIFICMIKINNKDIISTELIIPFCIKNDFEINYLYIFLSYFVLVGTSNAVNLTDGLDGLAIMPVIFLTCGLTLISLFSDNINISHYLHVQYVKNSTELAILCMAIVGSGLGFLWFNSYPAKVFMGDVGSLALGGSLGAIAILLHQELLLIIMGGIFVFETISVILQIISFKIRKKRIFQMAPVHHHYEVKGILEPLIIVRFWIVSLILLLISLISLKVC</sequence>
<gene>
    <name evidence="1" type="primary">mraY</name>
    <name type="ordered locus">BU219</name>
</gene>
<protein>
    <recommendedName>
        <fullName evidence="1">Phospho-N-acetylmuramoyl-pentapeptide-transferase</fullName>
        <ecNumber evidence="1">2.7.8.13</ecNumber>
    </recommendedName>
    <alternativeName>
        <fullName evidence="1">UDP-MurNAc-pentapeptide phosphotransferase</fullName>
    </alternativeName>
</protein>
<dbReference type="EC" id="2.7.8.13" evidence="1"/>
<dbReference type="EMBL" id="BA000003">
    <property type="protein sequence ID" value="BAB12935.1"/>
    <property type="molecule type" value="Genomic_DNA"/>
</dbReference>
<dbReference type="RefSeq" id="NP_240049.1">
    <property type="nucleotide sequence ID" value="NC_002528.1"/>
</dbReference>
<dbReference type="RefSeq" id="WP_010896010.1">
    <property type="nucleotide sequence ID" value="NC_002528.1"/>
</dbReference>
<dbReference type="SMR" id="P57314"/>
<dbReference type="STRING" id="563178.BUAP5A_215"/>
<dbReference type="EnsemblBacteria" id="BAB12935">
    <property type="protein sequence ID" value="BAB12935"/>
    <property type="gene ID" value="BAB12935"/>
</dbReference>
<dbReference type="KEGG" id="buc:BU219"/>
<dbReference type="PATRIC" id="fig|107806.10.peg.232"/>
<dbReference type="eggNOG" id="COG0472">
    <property type="taxonomic scope" value="Bacteria"/>
</dbReference>
<dbReference type="HOGENOM" id="CLU_023982_0_0_6"/>
<dbReference type="UniPathway" id="UPA00219"/>
<dbReference type="Proteomes" id="UP000001806">
    <property type="component" value="Chromosome"/>
</dbReference>
<dbReference type="GO" id="GO:0005886">
    <property type="term" value="C:plasma membrane"/>
    <property type="evidence" value="ECO:0007669"/>
    <property type="project" value="UniProtKB-SubCell"/>
</dbReference>
<dbReference type="GO" id="GO:0046872">
    <property type="term" value="F:metal ion binding"/>
    <property type="evidence" value="ECO:0007669"/>
    <property type="project" value="UniProtKB-KW"/>
</dbReference>
<dbReference type="GO" id="GO:0008963">
    <property type="term" value="F:phospho-N-acetylmuramoyl-pentapeptide-transferase activity"/>
    <property type="evidence" value="ECO:0007669"/>
    <property type="project" value="UniProtKB-UniRule"/>
</dbReference>
<dbReference type="GO" id="GO:0051992">
    <property type="term" value="F:UDP-N-acetylmuramoyl-L-alanyl-D-glutamyl-meso-2,6-diaminopimelyl-D-alanyl-D-alanine:undecaprenyl-phosphate transferase activity"/>
    <property type="evidence" value="ECO:0007669"/>
    <property type="project" value="RHEA"/>
</dbReference>
<dbReference type="GO" id="GO:0051301">
    <property type="term" value="P:cell division"/>
    <property type="evidence" value="ECO:0007669"/>
    <property type="project" value="UniProtKB-KW"/>
</dbReference>
<dbReference type="GO" id="GO:0071555">
    <property type="term" value="P:cell wall organization"/>
    <property type="evidence" value="ECO:0007669"/>
    <property type="project" value="UniProtKB-KW"/>
</dbReference>
<dbReference type="GO" id="GO:0009252">
    <property type="term" value="P:peptidoglycan biosynthetic process"/>
    <property type="evidence" value="ECO:0007669"/>
    <property type="project" value="UniProtKB-UniRule"/>
</dbReference>
<dbReference type="GO" id="GO:0008360">
    <property type="term" value="P:regulation of cell shape"/>
    <property type="evidence" value="ECO:0007669"/>
    <property type="project" value="UniProtKB-KW"/>
</dbReference>
<dbReference type="CDD" id="cd06852">
    <property type="entry name" value="GT_MraY"/>
    <property type="match status" value="1"/>
</dbReference>
<dbReference type="HAMAP" id="MF_00038">
    <property type="entry name" value="MraY"/>
    <property type="match status" value="1"/>
</dbReference>
<dbReference type="InterPro" id="IPR000715">
    <property type="entry name" value="Glycosyl_transferase_4"/>
</dbReference>
<dbReference type="InterPro" id="IPR003524">
    <property type="entry name" value="PNAcMuramoyl-5peptid_Trfase"/>
</dbReference>
<dbReference type="InterPro" id="IPR018480">
    <property type="entry name" value="PNAcMuramoyl-5peptid_Trfase_CS"/>
</dbReference>
<dbReference type="NCBIfam" id="TIGR00445">
    <property type="entry name" value="mraY"/>
    <property type="match status" value="1"/>
</dbReference>
<dbReference type="PANTHER" id="PTHR22926">
    <property type="entry name" value="PHOSPHO-N-ACETYLMURAMOYL-PENTAPEPTIDE-TRANSFERASE"/>
    <property type="match status" value="1"/>
</dbReference>
<dbReference type="PANTHER" id="PTHR22926:SF5">
    <property type="entry name" value="PHOSPHO-N-ACETYLMURAMOYL-PENTAPEPTIDE-TRANSFERASE HOMOLOG"/>
    <property type="match status" value="1"/>
</dbReference>
<dbReference type="Pfam" id="PF00953">
    <property type="entry name" value="Glycos_transf_4"/>
    <property type="match status" value="1"/>
</dbReference>
<dbReference type="Pfam" id="PF10555">
    <property type="entry name" value="MraY_sig1"/>
    <property type="match status" value="1"/>
</dbReference>
<dbReference type="PROSITE" id="PS01347">
    <property type="entry name" value="MRAY_1"/>
    <property type="match status" value="1"/>
</dbReference>
<dbReference type="PROSITE" id="PS01348">
    <property type="entry name" value="MRAY_2"/>
    <property type="match status" value="1"/>
</dbReference>
<accession>P57314</accession>